<evidence type="ECO:0000250" key="1"/>
<evidence type="ECO:0000256" key="2">
    <source>
        <dbReference type="SAM" id="MobiDB-lite"/>
    </source>
</evidence>
<evidence type="ECO:0000305" key="3"/>
<keyword id="KW-0507">mRNA processing</keyword>
<keyword id="KW-0539">Nucleus</keyword>
<keyword id="KW-1185">Reference proteome</keyword>
<keyword id="KW-0804">Transcription</keyword>
<reference key="1">
    <citation type="journal article" date="2004" name="Nature">
        <title>Genome evolution in yeasts.</title>
        <authorList>
            <person name="Dujon B."/>
            <person name="Sherman D."/>
            <person name="Fischer G."/>
            <person name="Durrens P."/>
            <person name="Casaregola S."/>
            <person name="Lafontaine I."/>
            <person name="de Montigny J."/>
            <person name="Marck C."/>
            <person name="Neuveglise C."/>
            <person name="Talla E."/>
            <person name="Goffard N."/>
            <person name="Frangeul L."/>
            <person name="Aigle M."/>
            <person name="Anthouard V."/>
            <person name="Babour A."/>
            <person name="Barbe V."/>
            <person name="Barnay S."/>
            <person name="Blanchin S."/>
            <person name="Beckerich J.-M."/>
            <person name="Beyne E."/>
            <person name="Bleykasten C."/>
            <person name="Boisrame A."/>
            <person name="Boyer J."/>
            <person name="Cattolico L."/>
            <person name="Confanioleri F."/>
            <person name="de Daruvar A."/>
            <person name="Despons L."/>
            <person name="Fabre E."/>
            <person name="Fairhead C."/>
            <person name="Ferry-Dumazet H."/>
            <person name="Groppi A."/>
            <person name="Hantraye F."/>
            <person name="Hennequin C."/>
            <person name="Jauniaux N."/>
            <person name="Joyet P."/>
            <person name="Kachouri R."/>
            <person name="Kerrest A."/>
            <person name="Koszul R."/>
            <person name="Lemaire M."/>
            <person name="Lesur I."/>
            <person name="Ma L."/>
            <person name="Muller H."/>
            <person name="Nicaud J.-M."/>
            <person name="Nikolski M."/>
            <person name="Oztas S."/>
            <person name="Ozier-Kalogeropoulos O."/>
            <person name="Pellenz S."/>
            <person name="Potier S."/>
            <person name="Richard G.-F."/>
            <person name="Straub M.-L."/>
            <person name="Suleau A."/>
            <person name="Swennen D."/>
            <person name="Tekaia F."/>
            <person name="Wesolowski-Louvel M."/>
            <person name="Westhof E."/>
            <person name="Wirth B."/>
            <person name="Zeniou-Meyer M."/>
            <person name="Zivanovic Y."/>
            <person name="Bolotin-Fukuhara M."/>
            <person name="Thierry A."/>
            <person name="Bouchier C."/>
            <person name="Caudron B."/>
            <person name="Scarpelli C."/>
            <person name="Gaillardin C."/>
            <person name="Weissenbach J."/>
            <person name="Wincker P."/>
            <person name="Souciet J.-L."/>
        </authorList>
    </citation>
    <scope>NUCLEOTIDE SEQUENCE [LARGE SCALE GENOMIC DNA]</scope>
    <source>
        <strain>ATCC 36239 / CBS 767 / BCRC 21394 / JCM 1990 / NBRC 0083 / IGC 2968</strain>
    </source>
</reference>
<proteinExistence type="inferred from homology"/>
<comment type="function">
    <text evidence="1">The SPT4-SPT5 complex mediates both activation and inhibition of transcription elongation, and plays a role in pre-mRNA processing. This complex seems to be important for the stability of the RNA polymerase II elongation machinery on the chromatin template but not for the inherent ability of this machinery to translocate down the gene (By similarity).</text>
</comment>
<comment type="subunit">
    <text evidence="1">Component of the SPT4-SPT5 complex. Interacts with RNA polymerase II (By similarity).</text>
</comment>
<comment type="subcellular location">
    <subcellularLocation>
        <location evidence="1">Nucleus</location>
    </subcellularLocation>
</comment>
<comment type="similarity">
    <text evidence="3">Belongs to the SPT5 family.</text>
</comment>
<protein>
    <recommendedName>
        <fullName>Transcription elongation factor SPT5</fullName>
    </recommendedName>
    <alternativeName>
        <fullName>Chromatin elongation factor SPT5</fullName>
    </alternativeName>
</protein>
<dbReference type="EMBL" id="CR382133">
    <property type="protein sequence ID" value="CAG84361.2"/>
    <property type="molecule type" value="Genomic_DNA"/>
</dbReference>
<dbReference type="RefSeq" id="XP_456409.2">
    <property type="nucleotide sequence ID" value="XM_456409.1"/>
</dbReference>
<dbReference type="SMR" id="Q6BZG0"/>
<dbReference type="FunCoup" id="Q6BZG0">
    <property type="interactions" value="1417"/>
</dbReference>
<dbReference type="STRING" id="284592.Q6BZG0"/>
<dbReference type="GeneID" id="2899625"/>
<dbReference type="KEGG" id="dha:DEHA2A01628g"/>
<dbReference type="VEuPathDB" id="FungiDB:DEHA2A01628g"/>
<dbReference type="eggNOG" id="KOG1999">
    <property type="taxonomic scope" value="Eukaryota"/>
</dbReference>
<dbReference type="HOGENOM" id="CLU_003537_1_0_1"/>
<dbReference type="InParanoid" id="Q6BZG0"/>
<dbReference type="OMA" id="YPVGYMN"/>
<dbReference type="OrthoDB" id="28901at2759"/>
<dbReference type="Proteomes" id="UP000000599">
    <property type="component" value="Chromosome A"/>
</dbReference>
<dbReference type="GO" id="GO:0032044">
    <property type="term" value="C:DSIF complex"/>
    <property type="evidence" value="ECO:0007669"/>
    <property type="project" value="EnsemblFungi"/>
</dbReference>
<dbReference type="GO" id="GO:0033553">
    <property type="term" value="C:rDNA heterochromatin"/>
    <property type="evidence" value="ECO:0007669"/>
    <property type="project" value="EnsemblFungi"/>
</dbReference>
<dbReference type="GO" id="GO:0140463">
    <property type="term" value="F:chromatin-protein adaptor activity"/>
    <property type="evidence" value="ECO:0007669"/>
    <property type="project" value="EnsemblFungi"/>
</dbReference>
<dbReference type="GO" id="GO:0003677">
    <property type="term" value="F:DNA binding"/>
    <property type="evidence" value="ECO:0007669"/>
    <property type="project" value="EnsemblFungi"/>
</dbReference>
<dbReference type="GO" id="GO:0042393">
    <property type="term" value="F:histone binding"/>
    <property type="evidence" value="ECO:0007669"/>
    <property type="project" value="EnsemblFungi"/>
</dbReference>
<dbReference type="GO" id="GO:0003729">
    <property type="term" value="F:mRNA binding"/>
    <property type="evidence" value="ECO:0007669"/>
    <property type="project" value="TreeGrafter"/>
</dbReference>
<dbReference type="GO" id="GO:0001042">
    <property type="term" value="F:RNA polymerase I core binding"/>
    <property type="evidence" value="ECO:0007669"/>
    <property type="project" value="EnsemblFungi"/>
</dbReference>
<dbReference type="GO" id="GO:0001179">
    <property type="term" value="F:RNA polymerase I general transcription initiation factor binding"/>
    <property type="evidence" value="ECO:0007669"/>
    <property type="project" value="EnsemblFungi"/>
</dbReference>
<dbReference type="GO" id="GO:0000993">
    <property type="term" value="F:RNA polymerase II complex binding"/>
    <property type="evidence" value="ECO:0007669"/>
    <property type="project" value="EnsemblFungi"/>
</dbReference>
<dbReference type="GO" id="GO:0019843">
    <property type="term" value="F:rRNA binding"/>
    <property type="evidence" value="ECO:0007669"/>
    <property type="project" value="EnsemblFungi"/>
</dbReference>
<dbReference type="GO" id="GO:0003727">
    <property type="term" value="F:single-stranded RNA binding"/>
    <property type="evidence" value="ECO:0007669"/>
    <property type="project" value="EnsemblFungi"/>
</dbReference>
<dbReference type="GO" id="GO:0070990">
    <property type="term" value="F:snRNP binding"/>
    <property type="evidence" value="ECO:0007669"/>
    <property type="project" value="EnsemblFungi"/>
</dbReference>
<dbReference type="GO" id="GO:0003711">
    <property type="term" value="F:transcription elongation factor activity"/>
    <property type="evidence" value="ECO:0007669"/>
    <property type="project" value="EnsemblFungi"/>
</dbReference>
<dbReference type="GO" id="GO:0030619">
    <property type="term" value="F:U1 snRNA binding"/>
    <property type="evidence" value="ECO:0007669"/>
    <property type="project" value="EnsemblFungi"/>
</dbReference>
<dbReference type="GO" id="GO:0030620">
    <property type="term" value="F:U2 snRNA binding"/>
    <property type="evidence" value="ECO:0007669"/>
    <property type="project" value="EnsemblFungi"/>
</dbReference>
<dbReference type="GO" id="GO:0030621">
    <property type="term" value="F:U4 snRNA binding"/>
    <property type="evidence" value="ECO:0007669"/>
    <property type="project" value="EnsemblFungi"/>
</dbReference>
<dbReference type="GO" id="GO:0030623">
    <property type="term" value="F:U5 snRNA binding"/>
    <property type="evidence" value="ECO:0007669"/>
    <property type="project" value="EnsemblFungi"/>
</dbReference>
<dbReference type="GO" id="GO:0017070">
    <property type="term" value="F:U6 snRNA binding"/>
    <property type="evidence" value="ECO:0007669"/>
    <property type="project" value="EnsemblFungi"/>
</dbReference>
<dbReference type="GO" id="GO:0008298">
    <property type="term" value="P:intracellular mRNA localization"/>
    <property type="evidence" value="ECO:0007669"/>
    <property type="project" value="EnsemblFungi"/>
</dbReference>
<dbReference type="GO" id="GO:2001208">
    <property type="term" value="P:negative regulation of transcription elongation by RNA polymerase I"/>
    <property type="evidence" value="ECO:0007669"/>
    <property type="project" value="EnsemblFungi"/>
</dbReference>
<dbReference type="GO" id="GO:0010508">
    <property type="term" value="P:positive regulation of autophagy"/>
    <property type="evidence" value="ECO:0007669"/>
    <property type="project" value="EnsemblFungi"/>
</dbReference>
<dbReference type="GO" id="GO:2001209">
    <property type="term" value="P:positive regulation of transcription elongation by RNA polymerase I"/>
    <property type="evidence" value="ECO:0007669"/>
    <property type="project" value="EnsemblFungi"/>
</dbReference>
<dbReference type="GO" id="GO:0032968">
    <property type="term" value="P:positive regulation of transcription elongation by RNA polymerase II"/>
    <property type="evidence" value="ECO:0007669"/>
    <property type="project" value="EnsemblFungi"/>
</dbReference>
<dbReference type="GO" id="GO:2000232">
    <property type="term" value="P:regulation of rRNA processing"/>
    <property type="evidence" value="ECO:0007669"/>
    <property type="project" value="EnsemblFungi"/>
</dbReference>
<dbReference type="GO" id="GO:0090262">
    <property type="term" value="P:regulation of transcription-coupled nucleotide-excision repair"/>
    <property type="evidence" value="ECO:0007669"/>
    <property type="project" value="EnsemblFungi"/>
</dbReference>
<dbReference type="GO" id="GO:0000245">
    <property type="term" value="P:spliceosomal complex assembly"/>
    <property type="evidence" value="ECO:0007669"/>
    <property type="project" value="EnsemblFungi"/>
</dbReference>
<dbReference type="GO" id="GO:0140673">
    <property type="term" value="P:transcription elongation-coupled chromatin remodeling"/>
    <property type="evidence" value="ECO:0007669"/>
    <property type="project" value="InterPro"/>
</dbReference>
<dbReference type="CDD" id="cd06081">
    <property type="entry name" value="KOW_Spt5_1"/>
    <property type="match status" value="1"/>
</dbReference>
<dbReference type="CDD" id="cd06082">
    <property type="entry name" value="KOW_Spt5_2"/>
    <property type="match status" value="1"/>
</dbReference>
<dbReference type="CDD" id="cd06083">
    <property type="entry name" value="KOW_Spt5_3"/>
    <property type="match status" value="1"/>
</dbReference>
<dbReference type="CDD" id="cd06084">
    <property type="entry name" value="KOW_Spt5_4"/>
    <property type="match status" value="1"/>
</dbReference>
<dbReference type="CDD" id="cd06085">
    <property type="entry name" value="KOW_Spt5_5"/>
    <property type="match status" value="1"/>
</dbReference>
<dbReference type="CDD" id="cd09888">
    <property type="entry name" value="NGN_Euk"/>
    <property type="match status" value="1"/>
</dbReference>
<dbReference type="FunFam" id="2.30.30.30:FF:000018">
    <property type="entry name" value="Transcription elongation factor SPT5"/>
    <property type="match status" value="1"/>
</dbReference>
<dbReference type="FunFam" id="3.30.70.940:FF:000005">
    <property type="entry name" value="Transcription elongation factor SPT5"/>
    <property type="match status" value="1"/>
</dbReference>
<dbReference type="Gene3D" id="2.30.30.30">
    <property type="match status" value="3"/>
</dbReference>
<dbReference type="Gene3D" id="3.30.70.940">
    <property type="entry name" value="NusG, N-terminal domain"/>
    <property type="match status" value="1"/>
</dbReference>
<dbReference type="InterPro" id="IPR005824">
    <property type="entry name" value="KOW"/>
</dbReference>
<dbReference type="InterPro" id="IPR041973">
    <property type="entry name" value="KOW_Spt5_1"/>
</dbReference>
<dbReference type="InterPro" id="IPR041975">
    <property type="entry name" value="KOW_Spt5_2"/>
</dbReference>
<dbReference type="InterPro" id="IPR041976">
    <property type="entry name" value="KOW_Spt5_3"/>
</dbReference>
<dbReference type="InterPro" id="IPR041977">
    <property type="entry name" value="KOW_Spt5_4"/>
</dbReference>
<dbReference type="InterPro" id="IPR041978">
    <property type="entry name" value="KOW_Spt5_5"/>
</dbReference>
<dbReference type="InterPro" id="IPR005100">
    <property type="entry name" value="NGN-domain"/>
</dbReference>
<dbReference type="InterPro" id="IPR006645">
    <property type="entry name" value="NGN-like_dom"/>
</dbReference>
<dbReference type="InterPro" id="IPR036735">
    <property type="entry name" value="NGN_dom_sf"/>
</dbReference>
<dbReference type="InterPro" id="IPR039385">
    <property type="entry name" value="NGN_Euk"/>
</dbReference>
<dbReference type="InterPro" id="IPR014722">
    <property type="entry name" value="Rib_uL2_dom2"/>
</dbReference>
<dbReference type="InterPro" id="IPR039659">
    <property type="entry name" value="SPT5"/>
</dbReference>
<dbReference type="InterPro" id="IPR022581">
    <property type="entry name" value="Spt5_N"/>
</dbReference>
<dbReference type="InterPro" id="IPR017071">
    <property type="entry name" value="TF_Spt5_eukaryote"/>
</dbReference>
<dbReference type="InterPro" id="IPR008991">
    <property type="entry name" value="Translation_prot_SH3-like_sf"/>
</dbReference>
<dbReference type="PANTHER" id="PTHR11125">
    <property type="entry name" value="SUPPRESSOR OF TY 5"/>
    <property type="match status" value="1"/>
</dbReference>
<dbReference type="PANTHER" id="PTHR11125:SF7">
    <property type="entry name" value="TRANSCRIPTION ELONGATION FACTOR SPT5"/>
    <property type="match status" value="1"/>
</dbReference>
<dbReference type="Pfam" id="PF00467">
    <property type="entry name" value="KOW"/>
    <property type="match status" value="1"/>
</dbReference>
<dbReference type="Pfam" id="PF23042">
    <property type="entry name" value="KOW1_SPT5"/>
    <property type="match status" value="1"/>
</dbReference>
<dbReference type="Pfam" id="PF23284">
    <property type="entry name" value="KOW2_Spt5"/>
    <property type="match status" value="1"/>
</dbReference>
<dbReference type="Pfam" id="PF23291">
    <property type="entry name" value="KOW4_SPT5"/>
    <property type="match status" value="1"/>
</dbReference>
<dbReference type="Pfam" id="PF23290">
    <property type="entry name" value="KOW5_SPT5"/>
    <property type="match status" value="1"/>
</dbReference>
<dbReference type="Pfam" id="PF23037">
    <property type="entry name" value="KOWx_SPT5"/>
    <property type="match status" value="1"/>
</dbReference>
<dbReference type="Pfam" id="PF03439">
    <property type="entry name" value="Spt5-NGN"/>
    <property type="match status" value="1"/>
</dbReference>
<dbReference type="Pfam" id="PF11942">
    <property type="entry name" value="Spt5_N"/>
    <property type="match status" value="1"/>
</dbReference>
<dbReference type="PIRSF" id="PIRSF036945">
    <property type="entry name" value="Spt5"/>
    <property type="match status" value="1"/>
</dbReference>
<dbReference type="SMART" id="SM00739">
    <property type="entry name" value="KOW"/>
    <property type="match status" value="5"/>
</dbReference>
<dbReference type="SMART" id="SM00738">
    <property type="entry name" value="NGN"/>
    <property type="match status" value="1"/>
</dbReference>
<dbReference type="SUPFAM" id="SSF50104">
    <property type="entry name" value="Translation proteins SH3-like domain"/>
    <property type="match status" value="1"/>
</dbReference>
<organism>
    <name type="scientific">Debaryomyces hansenii (strain ATCC 36239 / CBS 767 / BCRC 21394 / JCM 1990 / NBRC 0083 / IGC 2968)</name>
    <name type="common">Yeast</name>
    <name type="synonym">Torulaspora hansenii</name>
    <dbReference type="NCBI Taxonomy" id="284592"/>
    <lineage>
        <taxon>Eukaryota</taxon>
        <taxon>Fungi</taxon>
        <taxon>Dikarya</taxon>
        <taxon>Ascomycota</taxon>
        <taxon>Saccharomycotina</taxon>
        <taxon>Pichiomycetes</taxon>
        <taxon>Debaryomycetaceae</taxon>
        <taxon>Debaryomyces</taxon>
    </lineage>
</organism>
<name>SPT5_DEBHA</name>
<gene>
    <name type="primary">SPT5</name>
    <name type="ordered locus">DEHA2A01628g</name>
</gene>
<sequence length="967" mass="106327">MSEEENRITTSSDDVIKHEHPDNSTAGGAYEVQDRDQNDIDEEEEEKEENKRSAEEEYSIGSKRSLEDSEEGESKVPTENDQALINNSGEGAEQQDNGDEANDDENDDENDEDEDEDEDEEEVSSNKRKRRRGANQFIDIEAEVDDEEEDEMDEDDEEAELLREQFIADDSRVETMDGKDSAGEHQDDRLHRQFDRRRQEAEDQDAEVLAETLKQRYRKTHTVYRGDTTASGTVSQKLLMPSINDPAIYAIRCTPGREKDLVRKLYEKKRTLARSNPLEILTVFQRDSFKGYIYIEAKKPEAIERALTGMVNIYAKQRLLVPVREYPDLLKQVKSSDVEIVPGIYVRITRGKYKNDLAIVDNLSENGLDVRCKLVPRLDYGKNDDFDKDGKRIRSKTKPIPRLFSEQEARMYDGEYLQSGRGPRAFIYRGEEYNEGFLFKDFKLQFIQTKDVHPKLEELDRFQTGDPEEDGLDLAAIAASLKNKNNSEGAGRSSAFQPGDKVEIRRGEQAKTIGKVLSTSLNEITILVTDSGDPKFVNQRLTVPANDLRKLFSAGDHVRVIEGKHSDETGLVIKIDNDSVILLSDQTKQDVRVFANYLIKATDASSNTDVTGGKYDLNDLVQLNVSTVGVIVKAEKSSFEVLTSEGRLMSVNPAGIASKLELSRREQIATDRNGSTVKIGDTVKEVLGDKKREGAILHIYKNSLFIKSNEILENLGVFVTNCMNVSTITTKDSIVSKSLGPDLNRMNPNLKLPNPIANAGLKTRVGGRDKLIYKDVLVNSGNYKGLMGKVTEADEVYARIELHTKSKKIKVTKNSLSVLVRGEAIPYLRFIGASSGPGNSNPSGNFGGASFNQPAKTPAFSSGGKSSWGSGGATPSVGGGATAWGSGGAQSSWGGGKTPAYNSGNASTWGGNAGGASAWGNNNGNASTWGSNSKNGGSSTWGGNSTWGNSNKGGKSSWGNGSAWGGK</sequence>
<feature type="chain" id="PRO_0000238560" description="Transcription elongation factor SPT5">
    <location>
        <begin position="1"/>
        <end position="967"/>
    </location>
</feature>
<feature type="domain" description="KOW">
    <location>
        <begin position="552"/>
        <end position="585"/>
    </location>
</feature>
<feature type="region of interest" description="Disordered" evidence="2">
    <location>
        <begin position="1"/>
        <end position="191"/>
    </location>
</feature>
<feature type="region of interest" description="Disordered" evidence="2">
    <location>
        <begin position="839"/>
        <end position="897"/>
    </location>
</feature>
<feature type="region of interest" description="Disordered" evidence="2">
    <location>
        <begin position="914"/>
        <end position="967"/>
    </location>
</feature>
<feature type="compositionally biased region" description="Basic and acidic residues" evidence="2">
    <location>
        <begin position="64"/>
        <end position="78"/>
    </location>
</feature>
<feature type="compositionally biased region" description="Polar residues" evidence="2">
    <location>
        <begin position="79"/>
        <end position="89"/>
    </location>
</feature>
<feature type="compositionally biased region" description="Acidic residues" evidence="2">
    <location>
        <begin position="96"/>
        <end position="123"/>
    </location>
</feature>
<feature type="compositionally biased region" description="Acidic residues" evidence="2">
    <location>
        <begin position="140"/>
        <end position="159"/>
    </location>
</feature>
<feature type="compositionally biased region" description="Basic and acidic residues" evidence="2">
    <location>
        <begin position="169"/>
        <end position="191"/>
    </location>
</feature>
<feature type="compositionally biased region" description="Low complexity" evidence="2">
    <location>
        <begin position="839"/>
        <end position="852"/>
    </location>
</feature>
<feature type="compositionally biased region" description="Gly residues" evidence="2">
    <location>
        <begin position="869"/>
        <end position="897"/>
    </location>
</feature>
<feature type="compositionally biased region" description="Low complexity" evidence="2">
    <location>
        <begin position="914"/>
        <end position="961"/>
    </location>
</feature>
<accession>Q6BZG0</accession>